<feature type="signal peptide" evidence="2">
    <location>
        <begin position="1"/>
        <end position="27"/>
    </location>
</feature>
<feature type="chain" id="PRO_0000014536" description="Butyrophilin-like protein 1">
    <location>
        <begin position="28"/>
        <end position="509"/>
    </location>
</feature>
<feature type="topological domain" description="Extracellular" evidence="2">
    <location>
        <begin position="28"/>
        <end position="250"/>
    </location>
</feature>
<feature type="transmembrane region" description="Helical" evidence="2">
    <location>
        <begin position="251"/>
        <end position="271"/>
    </location>
</feature>
<feature type="topological domain" description="Cytoplasmic" evidence="2">
    <location>
        <begin position="272"/>
        <end position="509"/>
    </location>
</feature>
<feature type="domain" description="Ig-like V-type 1">
    <location>
        <begin position="28"/>
        <end position="139"/>
    </location>
</feature>
<feature type="domain" description="Ig-like V-type 2">
    <location>
        <begin position="151"/>
        <end position="237"/>
    </location>
</feature>
<feature type="domain" description="B30.2/SPRY" evidence="4">
    <location>
        <begin position="316"/>
        <end position="509"/>
    </location>
</feature>
<feature type="region of interest" description="Disordered" evidence="5">
    <location>
        <begin position="349"/>
        <end position="372"/>
    </location>
</feature>
<feature type="compositionally biased region" description="Basic and acidic residues" evidence="5">
    <location>
        <begin position="351"/>
        <end position="366"/>
    </location>
</feature>
<feature type="disulfide bond" evidence="3">
    <location>
        <begin position="53"/>
        <end position="127"/>
    </location>
</feature>
<feature type="disulfide bond" evidence="3">
    <location>
        <begin position="167"/>
        <end position="221"/>
    </location>
</feature>
<feature type="sequence conflict" description="In Ref. 3; AAH52925." evidence="6" ref="3">
    <original>F</original>
    <variation>S</variation>
    <location>
        <position position="22"/>
    </location>
</feature>
<feature type="sequence conflict" description="In Ref. 3; AAH52925." evidence="6" ref="3">
    <original>M</original>
    <variation>T</variation>
    <location>
        <position position="107"/>
    </location>
</feature>
<feature type="sequence conflict" description="In Ref. 3; AAH52925." evidence="6" ref="3">
    <original>M</original>
    <variation>T</variation>
    <location>
        <position position="187"/>
    </location>
</feature>
<feature type="sequence conflict" description="In Ref. 3; AAH52925." evidence="6" ref="3">
    <original>L</original>
    <variation>S</variation>
    <location>
        <position position="328"/>
    </location>
</feature>
<feature type="sequence conflict" description="In Ref. 3; AAH52925." evidence="6" ref="3">
    <original>DWRKEL</original>
    <variation>AIDLSN</variation>
    <location>
        <begin position="332"/>
        <end position="337"/>
    </location>
</feature>
<feature type="sequence conflict" description="In Ref. 3; AAH52925." evidence="6" ref="3">
    <original>QEA</original>
    <variation>CIK</variation>
    <location>
        <begin position="339"/>
        <end position="341"/>
    </location>
</feature>
<dbReference type="EMBL" id="AF050157">
    <property type="protein sequence ID" value="AAC05289.1"/>
    <property type="status" value="ALT_SEQ"/>
    <property type="molecule type" value="Genomic_DNA"/>
</dbReference>
<dbReference type="EMBL" id="CR974457">
    <property type="protein sequence ID" value="CAO77747.1"/>
    <property type="molecule type" value="Genomic_DNA"/>
</dbReference>
<dbReference type="EMBL" id="BC052925">
    <property type="protein sequence ID" value="AAH52925.1"/>
    <property type="status" value="ALT_SEQ"/>
    <property type="molecule type" value="mRNA"/>
</dbReference>
<dbReference type="CCDS" id="CCDS50075.1"/>
<dbReference type="RefSeq" id="NP_001104564.1">
    <property type="nucleotide sequence ID" value="NM_001111094.1"/>
</dbReference>
<dbReference type="SMR" id="Q7TST0"/>
<dbReference type="FunCoup" id="Q7TST0">
    <property type="interactions" value="203"/>
</dbReference>
<dbReference type="STRING" id="10090.ENSMUSP00000079140"/>
<dbReference type="GlyGen" id="Q7TST0">
    <property type="glycosylation" value="1 site"/>
</dbReference>
<dbReference type="iPTMnet" id="Q7TST0"/>
<dbReference type="PhosphoSitePlus" id="Q7TST0"/>
<dbReference type="PaxDb" id="10090-ENSMUSP00000079140"/>
<dbReference type="PeptideAtlas" id="Q7TST0"/>
<dbReference type="ProteomicsDB" id="273715"/>
<dbReference type="DNASU" id="100038862"/>
<dbReference type="Ensembl" id="ENSMUST00000080254.7">
    <property type="protein sequence ID" value="ENSMUSP00000079140.6"/>
    <property type="gene ID" value="ENSMUSG00000062638.12"/>
</dbReference>
<dbReference type="GeneID" id="100038862"/>
<dbReference type="KEGG" id="mmu:100038862"/>
<dbReference type="UCSC" id="uc012apy.1">
    <property type="organism name" value="mouse"/>
</dbReference>
<dbReference type="AGR" id="MGI:1932027"/>
<dbReference type="CTD" id="100038862"/>
<dbReference type="MGI" id="MGI:1932027">
    <property type="gene designation" value="Btnl1"/>
</dbReference>
<dbReference type="VEuPathDB" id="HostDB:ENSMUSG00000062638"/>
<dbReference type="eggNOG" id="ENOG502QSRZ">
    <property type="taxonomic scope" value="Eukaryota"/>
</dbReference>
<dbReference type="GeneTree" id="ENSGT00940000162079"/>
<dbReference type="HOGENOM" id="CLU_013137_22_2_1"/>
<dbReference type="InParanoid" id="Q7TST0"/>
<dbReference type="OMA" id="ISYTGWR"/>
<dbReference type="OrthoDB" id="9049620at2759"/>
<dbReference type="PhylomeDB" id="Q7TST0"/>
<dbReference type="TreeFam" id="TF331083"/>
<dbReference type="BioGRID-ORCS" id="100038862">
    <property type="hits" value="1 hit in 76 CRISPR screens"/>
</dbReference>
<dbReference type="PRO" id="PR:Q7TST0"/>
<dbReference type="Proteomes" id="UP000000589">
    <property type="component" value="Chromosome 17"/>
</dbReference>
<dbReference type="RNAct" id="Q7TST0">
    <property type="molecule type" value="protein"/>
</dbReference>
<dbReference type="Bgee" id="ENSMUSG00000062638">
    <property type="expression patterns" value="Expressed in jejunum and 13 other cell types or tissues"/>
</dbReference>
<dbReference type="GO" id="GO:0009986">
    <property type="term" value="C:cell surface"/>
    <property type="evidence" value="ECO:0000314"/>
    <property type="project" value="MGI"/>
</dbReference>
<dbReference type="GO" id="GO:0016020">
    <property type="term" value="C:membrane"/>
    <property type="evidence" value="ECO:0007669"/>
    <property type="project" value="UniProtKB-SubCell"/>
</dbReference>
<dbReference type="GO" id="GO:0045062">
    <property type="term" value="P:extrathymic T cell selection"/>
    <property type="evidence" value="ECO:0000315"/>
    <property type="project" value="MGI"/>
</dbReference>
<dbReference type="CDD" id="cd05713">
    <property type="entry name" value="IgV_MOG_like"/>
    <property type="match status" value="1"/>
</dbReference>
<dbReference type="FunFam" id="2.60.40.10:FF:000088">
    <property type="entry name" value="Butyrophilin subfamily 1 member A1"/>
    <property type="match status" value="1"/>
</dbReference>
<dbReference type="FunFam" id="2.60.40.10:FF:000208">
    <property type="entry name" value="Butyrophilin subfamily 1 member A1"/>
    <property type="match status" value="1"/>
</dbReference>
<dbReference type="FunFam" id="2.60.120.920:FF:000086">
    <property type="entry name" value="Butyrophilin-like protein 1"/>
    <property type="match status" value="1"/>
</dbReference>
<dbReference type="Gene3D" id="2.60.120.920">
    <property type="match status" value="1"/>
</dbReference>
<dbReference type="Gene3D" id="2.60.40.10">
    <property type="entry name" value="Immunoglobulins"/>
    <property type="match status" value="2"/>
</dbReference>
<dbReference type="InterPro" id="IPR001870">
    <property type="entry name" value="B30.2/SPRY"/>
</dbReference>
<dbReference type="InterPro" id="IPR043136">
    <property type="entry name" value="B30.2/SPRY_sf"/>
</dbReference>
<dbReference type="InterPro" id="IPR053896">
    <property type="entry name" value="BTN3A2-like_Ig-C"/>
</dbReference>
<dbReference type="InterPro" id="IPR003879">
    <property type="entry name" value="Butyrophylin_SPRY"/>
</dbReference>
<dbReference type="InterPro" id="IPR013320">
    <property type="entry name" value="ConA-like_dom_sf"/>
</dbReference>
<dbReference type="InterPro" id="IPR007110">
    <property type="entry name" value="Ig-like_dom"/>
</dbReference>
<dbReference type="InterPro" id="IPR036179">
    <property type="entry name" value="Ig-like_dom_sf"/>
</dbReference>
<dbReference type="InterPro" id="IPR013783">
    <property type="entry name" value="Ig-like_fold"/>
</dbReference>
<dbReference type="InterPro" id="IPR003599">
    <property type="entry name" value="Ig_sub"/>
</dbReference>
<dbReference type="InterPro" id="IPR013106">
    <property type="entry name" value="Ig_V-set"/>
</dbReference>
<dbReference type="InterPro" id="IPR050504">
    <property type="entry name" value="IgSF_BTN/MOG"/>
</dbReference>
<dbReference type="InterPro" id="IPR003877">
    <property type="entry name" value="SPRY_dom"/>
</dbReference>
<dbReference type="PANTHER" id="PTHR24100">
    <property type="entry name" value="BUTYROPHILIN"/>
    <property type="match status" value="1"/>
</dbReference>
<dbReference type="PANTHER" id="PTHR24100:SF134">
    <property type="entry name" value="BUTYROPHILIN-LIKE PROTEIN 1"/>
    <property type="match status" value="1"/>
</dbReference>
<dbReference type="Pfam" id="PF22705">
    <property type="entry name" value="C2-set_3"/>
    <property type="match status" value="1"/>
</dbReference>
<dbReference type="Pfam" id="PF00622">
    <property type="entry name" value="SPRY"/>
    <property type="match status" value="1"/>
</dbReference>
<dbReference type="Pfam" id="PF07686">
    <property type="entry name" value="V-set"/>
    <property type="match status" value="1"/>
</dbReference>
<dbReference type="PRINTS" id="PR01407">
    <property type="entry name" value="BUTYPHLNCDUF"/>
</dbReference>
<dbReference type="SMART" id="SM00409">
    <property type="entry name" value="IG"/>
    <property type="match status" value="1"/>
</dbReference>
<dbReference type="SMART" id="SM00406">
    <property type="entry name" value="IGv"/>
    <property type="match status" value="1"/>
</dbReference>
<dbReference type="SUPFAM" id="SSF49899">
    <property type="entry name" value="Concanavalin A-like lectins/glucanases"/>
    <property type="match status" value="1"/>
</dbReference>
<dbReference type="SUPFAM" id="SSF48726">
    <property type="entry name" value="Immunoglobulin"/>
    <property type="match status" value="2"/>
</dbReference>
<dbReference type="PROSITE" id="PS50188">
    <property type="entry name" value="B302_SPRY"/>
    <property type="match status" value="1"/>
</dbReference>
<dbReference type="PROSITE" id="PS50835">
    <property type="entry name" value="IG_LIKE"/>
    <property type="match status" value="2"/>
</dbReference>
<reference key="1">
    <citation type="submission" date="1998-02" db="EMBL/GenBank/DDBJ databases">
        <title>Sequence of the mouse major histocompatibility class II region.</title>
        <authorList>
            <person name="Rowen L."/>
            <person name="Qin S."/>
            <person name="Loretz C."/>
            <person name="Mix L."/>
            <person name="Lasky S."/>
            <person name="Madan A."/>
            <person name="Hood L."/>
        </authorList>
    </citation>
    <scope>NUCLEOTIDE SEQUENCE [LARGE SCALE GENOMIC DNA]</scope>
    <source>
        <strain>129</strain>
    </source>
</reference>
<reference key="2">
    <citation type="journal article" date="2009" name="PLoS Biol.">
        <title>Lineage-specific biology revealed by a finished genome assembly of the mouse.</title>
        <authorList>
            <person name="Church D.M."/>
            <person name="Goodstadt L."/>
            <person name="Hillier L.W."/>
            <person name="Zody M.C."/>
            <person name="Goldstein S."/>
            <person name="She X."/>
            <person name="Bult C.J."/>
            <person name="Agarwala R."/>
            <person name="Cherry J.L."/>
            <person name="DiCuccio M."/>
            <person name="Hlavina W."/>
            <person name="Kapustin Y."/>
            <person name="Meric P."/>
            <person name="Maglott D."/>
            <person name="Birtle Z."/>
            <person name="Marques A.C."/>
            <person name="Graves T."/>
            <person name="Zhou S."/>
            <person name="Teague B."/>
            <person name="Potamousis K."/>
            <person name="Churas C."/>
            <person name="Place M."/>
            <person name="Herschleb J."/>
            <person name="Runnheim R."/>
            <person name="Forrest D."/>
            <person name="Amos-Landgraf J."/>
            <person name="Schwartz D.C."/>
            <person name="Cheng Z."/>
            <person name="Lindblad-Toh K."/>
            <person name="Eichler E.E."/>
            <person name="Ponting C.P."/>
        </authorList>
    </citation>
    <scope>NUCLEOTIDE SEQUENCE [LARGE SCALE GENOMIC DNA]</scope>
    <source>
        <strain>C57BL/6J</strain>
    </source>
</reference>
<reference key="3">
    <citation type="journal article" date="2004" name="Genome Res.">
        <title>The status, quality, and expansion of the NIH full-length cDNA project: the Mammalian Gene Collection (MGC).</title>
        <authorList>
            <consortium name="The MGC Project Team"/>
        </authorList>
    </citation>
    <scope>NUCLEOTIDE SEQUENCE [LARGE SCALE MRNA] OF 1-342</scope>
    <source>
        <strain>FVB/N</strain>
        <tissue>Colon</tissue>
    </source>
</reference>
<gene>
    <name type="primary">Btnl1</name>
    <name type="synonym">Btnl3</name>
    <name type="synonym">Gm316</name>
    <name type="synonym">Ng10</name>
</gene>
<keyword id="KW-1015">Disulfide bond</keyword>
<keyword id="KW-0393">Immunoglobulin domain</keyword>
<keyword id="KW-0472">Membrane</keyword>
<keyword id="KW-1185">Reference proteome</keyword>
<keyword id="KW-0677">Repeat</keyword>
<keyword id="KW-0732">Signal</keyword>
<keyword id="KW-0812">Transmembrane</keyword>
<keyword id="KW-1133">Transmembrane helix</keyword>
<accession>Q7TST0</accession>
<accession>A6X8K2</accession>
<accession>G3UZN0</accession>
<accession>O70356</accession>
<proteinExistence type="evidence at transcript level"/>
<protein>
    <recommendedName>
        <fullName>Butyrophilin-like protein 1</fullName>
    </recommendedName>
</protein>
<name>BTNL1_MOUSE</name>
<comment type="subcellular location">
    <subcellularLocation>
        <location evidence="1">Membrane</location>
        <topology evidence="1">Single-pass type I membrane protein</topology>
    </subcellularLocation>
</comment>
<comment type="similarity">
    <text evidence="6">Belongs to the immunoglobulin superfamily. BTN/MOG family.</text>
</comment>
<comment type="sequence caution" evidence="6">
    <conflict type="erroneous gene model prediction">
        <sequence resource="EMBL-CDS" id="AAC05289"/>
    </conflict>
</comment>
<comment type="sequence caution" evidence="6">
    <conflict type="erroneous initiation">
        <sequence resource="EMBL-CDS" id="AAH52925"/>
    </conflict>
    <text>Truncated N-terminus.</text>
</comment>
<comment type="sequence caution" evidence="6">
    <conflict type="miscellaneous discrepancy">
        <sequence resource="EMBL-CDS" id="AAH52925"/>
    </conflict>
    <text>Aberrant splicing.</text>
</comment>
<evidence type="ECO:0000250" key="1"/>
<evidence type="ECO:0000255" key="2"/>
<evidence type="ECO:0000255" key="3">
    <source>
        <dbReference type="PROSITE-ProRule" id="PRU00114"/>
    </source>
</evidence>
<evidence type="ECO:0000255" key="4">
    <source>
        <dbReference type="PROSITE-ProRule" id="PRU00548"/>
    </source>
</evidence>
<evidence type="ECO:0000256" key="5">
    <source>
        <dbReference type="SAM" id="MobiDB-lite"/>
    </source>
</evidence>
<evidence type="ECO:0000305" key="6"/>
<organism>
    <name type="scientific">Mus musculus</name>
    <name type="common">Mouse</name>
    <dbReference type="NCBI Taxonomy" id="10090"/>
    <lineage>
        <taxon>Eukaryota</taxon>
        <taxon>Metazoa</taxon>
        <taxon>Chordata</taxon>
        <taxon>Craniata</taxon>
        <taxon>Vertebrata</taxon>
        <taxon>Euteleostomi</taxon>
        <taxon>Mammalia</taxon>
        <taxon>Eutheria</taxon>
        <taxon>Euarchontoglires</taxon>
        <taxon>Glires</taxon>
        <taxon>Rodentia</taxon>
        <taxon>Myomorpha</taxon>
        <taxon>Muroidea</taxon>
        <taxon>Muridae</taxon>
        <taxon>Murinae</taxon>
        <taxon>Mus</taxon>
        <taxon>Mus</taxon>
    </lineage>
</organism>
<sequence length="509" mass="57726">MMKGSPSVPPAGCLLPLLLLLFTGVSGEVSWFSVKGPAEPITVLLGTEATLPCQLSPEQSAARMHIRWYRAQPTPAVLVFHNGQEQGEVQMPEYRGRTQMVRQAIDMGSVALQIQQVQASDDGLYHCQFTDGFTSQEVSMELRVIGLGSAPLVHMTGPENDGIRVLCSSSGWFPKPKVQWRDTSGNMLLSSSELQTQDREGLFQVEVSLLVTDRAIGNVICSIQNPMYDQEKSKAILLPEPFFPKTCPWKVALVCSVLILLVLLGGISLGIWKEHQVKRREIKKWSKEHEEMLLLKKGTKSVLKIRDDLQADLDRRKALYKEDWKKALLYPDWRKELFQEAPVRINYEMPDQDKTDSRTEENRGEETVSSSQVDHNLITLSQEGFMLGRYYWEVDVKDTEEWTLGVYELCTQDASLTDPLRKFRVLEKNGDGYRALDFCSQNINSEEPLQLKTRPLKIAIFLDQEDNDLSFYNMTDETHIFSFAQVPFLGSPYPYFTRNSMGLSATAQP</sequence>